<gene>
    <name evidence="1" type="primary">gatC</name>
    <name type="ordered locus">SYO3AOP1_0359</name>
</gene>
<dbReference type="EC" id="6.3.5.-" evidence="1"/>
<dbReference type="EMBL" id="CP001080">
    <property type="protein sequence ID" value="ACD66004.1"/>
    <property type="molecule type" value="Genomic_DNA"/>
</dbReference>
<dbReference type="RefSeq" id="WP_012459088.1">
    <property type="nucleotide sequence ID" value="NC_010730.1"/>
</dbReference>
<dbReference type="SMR" id="B2V7T1"/>
<dbReference type="STRING" id="436114.SYO3AOP1_0359"/>
<dbReference type="KEGG" id="sul:SYO3AOP1_0359"/>
<dbReference type="eggNOG" id="COG0721">
    <property type="taxonomic scope" value="Bacteria"/>
</dbReference>
<dbReference type="HOGENOM" id="CLU_105899_6_1_0"/>
<dbReference type="GO" id="GO:0050566">
    <property type="term" value="F:asparaginyl-tRNA synthase (glutamine-hydrolyzing) activity"/>
    <property type="evidence" value="ECO:0007669"/>
    <property type="project" value="RHEA"/>
</dbReference>
<dbReference type="GO" id="GO:0005524">
    <property type="term" value="F:ATP binding"/>
    <property type="evidence" value="ECO:0007669"/>
    <property type="project" value="UniProtKB-KW"/>
</dbReference>
<dbReference type="GO" id="GO:0050567">
    <property type="term" value="F:glutaminyl-tRNA synthase (glutamine-hydrolyzing) activity"/>
    <property type="evidence" value="ECO:0007669"/>
    <property type="project" value="UniProtKB-UniRule"/>
</dbReference>
<dbReference type="GO" id="GO:0070681">
    <property type="term" value="P:glutaminyl-tRNAGln biosynthesis via transamidation"/>
    <property type="evidence" value="ECO:0007669"/>
    <property type="project" value="TreeGrafter"/>
</dbReference>
<dbReference type="GO" id="GO:0006450">
    <property type="term" value="P:regulation of translational fidelity"/>
    <property type="evidence" value="ECO:0007669"/>
    <property type="project" value="InterPro"/>
</dbReference>
<dbReference type="GO" id="GO:0006412">
    <property type="term" value="P:translation"/>
    <property type="evidence" value="ECO:0007669"/>
    <property type="project" value="UniProtKB-UniRule"/>
</dbReference>
<dbReference type="Gene3D" id="1.10.20.60">
    <property type="entry name" value="Glu-tRNAGln amidotransferase C subunit, N-terminal domain"/>
    <property type="match status" value="1"/>
</dbReference>
<dbReference type="HAMAP" id="MF_00122">
    <property type="entry name" value="GatC"/>
    <property type="match status" value="1"/>
</dbReference>
<dbReference type="InterPro" id="IPR036113">
    <property type="entry name" value="Asp/Glu-ADT_sf_sub_c"/>
</dbReference>
<dbReference type="InterPro" id="IPR003837">
    <property type="entry name" value="GatC"/>
</dbReference>
<dbReference type="NCBIfam" id="TIGR00135">
    <property type="entry name" value="gatC"/>
    <property type="match status" value="1"/>
</dbReference>
<dbReference type="PANTHER" id="PTHR15004">
    <property type="entry name" value="GLUTAMYL-TRNA(GLN) AMIDOTRANSFERASE SUBUNIT C, MITOCHONDRIAL"/>
    <property type="match status" value="1"/>
</dbReference>
<dbReference type="PANTHER" id="PTHR15004:SF0">
    <property type="entry name" value="GLUTAMYL-TRNA(GLN) AMIDOTRANSFERASE SUBUNIT C, MITOCHONDRIAL"/>
    <property type="match status" value="1"/>
</dbReference>
<dbReference type="Pfam" id="PF02686">
    <property type="entry name" value="GatC"/>
    <property type="match status" value="1"/>
</dbReference>
<dbReference type="SUPFAM" id="SSF141000">
    <property type="entry name" value="Glu-tRNAGln amidotransferase C subunit"/>
    <property type="match status" value="1"/>
</dbReference>
<protein>
    <recommendedName>
        <fullName evidence="1">Aspartyl/glutamyl-tRNA(Asn/Gln) amidotransferase subunit C</fullName>
        <shortName evidence="1">Asp/Glu-ADT subunit C</shortName>
        <ecNumber evidence="1">6.3.5.-</ecNumber>
    </recommendedName>
</protein>
<name>GATC_SULSY</name>
<sequence length="99" mass="11357">MTNQIEKELIEKVAKLSNLKLKEEEIELFSNQFKDILSFIDKLNEVDVKDTLPFYELQIEEKSEREDIPTGSITNEEAIKNAPQAKGGFFVVPRVVGEE</sequence>
<accession>B2V7T1</accession>
<feature type="chain" id="PRO_1000095319" description="Aspartyl/glutamyl-tRNA(Asn/Gln) amidotransferase subunit C">
    <location>
        <begin position="1"/>
        <end position="99"/>
    </location>
</feature>
<comment type="function">
    <text evidence="1">Allows the formation of correctly charged Asn-tRNA(Asn) or Gln-tRNA(Gln) through the transamidation of misacylated Asp-tRNA(Asn) or Glu-tRNA(Gln) in organisms which lack either or both of asparaginyl-tRNA or glutaminyl-tRNA synthetases. The reaction takes place in the presence of glutamine and ATP through an activated phospho-Asp-tRNA(Asn) or phospho-Glu-tRNA(Gln).</text>
</comment>
<comment type="catalytic activity">
    <reaction evidence="1">
        <text>L-glutamyl-tRNA(Gln) + L-glutamine + ATP + H2O = L-glutaminyl-tRNA(Gln) + L-glutamate + ADP + phosphate + H(+)</text>
        <dbReference type="Rhea" id="RHEA:17521"/>
        <dbReference type="Rhea" id="RHEA-COMP:9681"/>
        <dbReference type="Rhea" id="RHEA-COMP:9684"/>
        <dbReference type="ChEBI" id="CHEBI:15377"/>
        <dbReference type="ChEBI" id="CHEBI:15378"/>
        <dbReference type="ChEBI" id="CHEBI:29985"/>
        <dbReference type="ChEBI" id="CHEBI:30616"/>
        <dbReference type="ChEBI" id="CHEBI:43474"/>
        <dbReference type="ChEBI" id="CHEBI:58359"/>
        <dbReference type="ChEBI" id="CHEBI:78520"/>
        <dbReference type="ChEBI" id="CHEBI:78521"/>
        <dbReference type="ChEBI" id="CHEBI:456216"/>
    </reaction>
</comment>
<comment type="catalytic activity">
    <reaction evidence="1">
        <text>L-aspartyl-tRNA(Asn) + L-glutamine + ATP + H2O = L-asparaginyl-tRNA(Asn) + L-glutamate + ADP + phosphate + 2 H(+)</text>
        <dbReference type="Rhea" id="RHEA:14513"/>
        <dbReference type="Rhea" id="RHEA-COMP:9674"/>
        <dbReference type="Rhea" id="RHEA-COMP:9677"/>
        <dbReference type="ChEBI" id="CHEBI:15377"/>
        <dbReference type="ChEBI" id="CHEBI:15378"/>
        <dbReference type="ChEBI" id="CHEBI:29985"/>
        <dbReference type="ChEBI" id="CHEBI:30616"/>
        <dbReference type="ChEBI" id="CHEBI:43474"/>
        <dbReference type="ChEBI" id="CHEBI:58359"/>
        <dbReference type="ChEBI" id="CHEBI:78515"/>
        <dbReference type="ChEBI" id="CHEBI:78516"/>
        <dbReference type="ChEBI" id="CHEBI:456216"/>
    </reaction>
</comment>
<comment type="subunit">
    <text evidence="1">Heterotrimer of A, B and C subunits.</text>
</comment>
<comment type="similarity">
    <text evidence="1">Belongs to the GatC family.</text>
</comment>
<keyword id="KW-0067">ATP-binding</keyword>
<keyword id="KW-0436">Ligase</keyword>
<keyword id="KW-0547">Nucleotide-binding</keyword>
<keyword id="KW-0648">Protein biosynthesis</keyword>
<reference key="1">
    <citation type="journal article" date="2009" name="J. Bacteriol.">
        <title>Complete and draft genome sequences of six members of the Aquificales.</title>
        <authorList>
            <person name="Reysenbach A.-L."/>
            <person name="Hamamura N."/>
            <person name="Podar M."/>
            <person name="Griffiths E."/>
            <person name="Ferreira S."/>
            <person name="Hochstein R."/>
            <person name="Heidelberg J."/>
            <person name="Johnson J."/>
            <person name="Mead D."/>
            <person name="Pohorille A."/>
            <person name="Sarmiento M."/>
            <person name="Schweighofer K."/>
            <person name="Seshadri R."/>
            <person name="Voytek M.A."/>
        </authorList>
    </citation>
    <scope>NUCLEOTIDE SEQUENCE [LARGE SCALE GENOMIC DNA]</scope>
    <source>
        <strain>YO3AOP1</strain>
    </source>
</reference>
<organism>
    <name type="scientific">Sulfurihydrogenibium sp. (strain YO3AOP1)</name>
    <dbReference type="NCBI Taxonomy" id="436114"/>
    <lineage>
        <taxon>Bacteria</taxon>
        <taxon>Pseudomonadati</taxon>
        <taxon>Aquificota</taxon>
        <taxon>Aquificia</taxon>
        <taxon>Aquificales</taxon>
        <taxon>Hydrogenothermaceae</taxon>
        <taxon>Sulfurihydrogenibium</taxon>
    </lineage>
</organism>
<proteinExistence type="inferred from homology"/>
<evidence type="ECO:0000255" key="1">
    <source>
        <dbReference type="HAMAP-Rule" id="MF_00122"/>
    </source>
</evidence>